<keyword id="KW-1003">Cell membrane</keyword>
<keyword id="KW-0903">Direct protein sequencing</keyword>
<keyword id="KW-0472">Membrane</keyword>
<keyword id="KW-1185">Reference proteome</keyword>
<keyword id="KW-0812">Transmembrane</keyword>
<keyword id="KW-1133">Transmembrane helix</keyword>
<sequence length="200" mass="21682">MVCWLRSRWRPVADNDYRSAPGTEPFVPDFDTGAHSQRFLSLAGQQDRAGKSWPGSTPKPQEDPVGVAPSASVEVLGSEPAATLAHSVTVPGRYTYLKWWKFVLVVLGVWIGAGEVGLSLFYWWYHTLDKTAAVFVVLVYVVACTVGGLILALVPGRPLITALSLGVMSGPFASVAAAAPLYGYYYCERMSHCLVGVIPY</sequence>
<gene>
    <name evidence="5" type="ordered locus">Rv0461</name>
</gene>
<accession>I6X961</accession>
<accession>L0T5F9</accession>
<name>Y461_MYCTU</name>
<organism>
    <name type="scientific">Mycobacterium tuberculosis (strain ATCC 25618 / H37Rv)</name>
    <dbReference type="NCBI Taxonomy" id="83332"/>
    <lineage>
        <taxon>Bacteria</taxon>
        <taxon>Bacillati</taxon>
        <taxon>Actinomycetota</taxon>
        <taxon>Actinomycetes</taxon>
        <taxon>Mycobacteriales</taxon>
        <taxon>Mycobacteriaceae</taxon>
        <taxon>Mycobacterium</taxon>
        <taxon>Mycobacterium tuberculosis complex</taxon>
    </lineage>
</organism>
<dbReference type="EMBL" id="AL123456">
    <property type="protein sequence ID" value="CCP43194.1"/>
    <property type="status" value="ALT_INIT"/>
    <property type="molecule type" value="Genomic_DNA"/>
</dbReference>
<dbReference type="RefSeq" id="NP_214975.1">
    <property type="nucleotide sequence ID" value="NC_000962.3"/>
</dbReference>
<dbReference type="RefSeq" id="WP_003402299.1">
    <property type="nucleotide sequence ID" value="NC_000962.3"/>
</dbReference>
<dbReference type="STRING" id="83332.Rv0461"/>
<dbReference type="PaxDb" id="83332-Rv0461"/>
<dbReference type="DNASU" id="886302"/>
<dbReference type="GeneID" id="886302"/>
<dbReference type="KEGG" id="mtu:Rv0461"/>
<dbReference type="PATRIC" id="fig|83332.111.peg.505"/>
<dbReference type="TubercuList" id="Rv0461"/>
<dbReference type="eggNOG" id="ENOG5031J77">
    <property type="taxonomic scope" value="Bacteria"/>
</dbReference>
<dbReference type="InParanoid" id="I6X961"/>
<dbReference type="OrthoDB" id="4762325at2"/>
<dbReference type="Proteomes" id="UP000001584">
    <property type="component" value="Chromosome"/>
</dbReference>
<dbReference type="GO" id="GO:0005886">
    <property type="term" value="C:plasma membrane"/>
    <property type="evidence" value="ECO:0007669"/>
    <property type="project" value="UniProtKB-SubCell"/>
</dbReference>
<protein>
    <recommendedName>
        <fullName evidence="4">Protein Rv0461</fullName>
    </recommendedName>
</protein>
<reference evidence="5" key="1">
    <citation type="journal article" date="1998" name="Nature">
        <title>Deciphering the biology of Mycobacterium tuberculosis from the complete genome sequence.</title>
        <authorList>
            <person name="Cole S.T."/>
            <person name="Brosch R."/>
            <person name="Parkhill J."/>
            <person name="Garnier T."/>
            <person name="Churcher C.M."/>
            <person name="Harris D.E."/>
            <person name="Gordon S.V."/>
            <person name="Eiglmeier K."/>
            <person name="Gas S."/>
            <person name="Barry C.E. III"/>
            <person name="Tekaia F."/>
            <person name="Badcock K."/>
            <person name="Basham D."/>
            <person name="Brown D."/>
            <person name="Chillingworth T."/>
            <person name="Connor R."/>
            <person name="Davies R.M."/>
            <person name="Devlin K."/>
            <person name="Feltwell T."/>
            <person name="Gentles S."/>
            <person name="Hamlin N."/>
            <person name="Holroyd S."/>
            <person name="Hornsby T."/>
            <person name="Jagels K."/>
            <person name="Krogh A."/>
            <person name="McLean J."/>
            <person name="Moule S."/>
            <person name="Murphy L.D."/>
            <person name="Oliver S."/>
            <person name="Osborne J."/>
            <person name="Quail M.A."/>
            <person name="Rajandream M.A."/>
            <person name="Rogers J."/>
            <person name="Rutter S."/>
            <person name="Seeger K."/>
            <person name="Skelton S."/>
            <person name="Squares S."/>
            <person name="Squares R."/>
            <person name="Sulston J.E."/>
            <person name="Taylor K."/>
            <person name="Whitehead S."/>
            <person name="Barrell B.G."/>
        </authorList>
    </citation>
    <scope>NUCLEOTIDE SEQUENCE [LARGE SCALE GENOMIC DNA]</scope>
    <source>
        <strain>ATCC 25618 / H37Rv</strain>
    </source>
</reference>
<reference key="2">
    <citation type="journal article" date="2022" name="Genomics">
        <title>Deep N-terminomics of Mycobacterium tuberculosis H37Rv extensively correct annotated encoding genes.</title>
        <authorList>
            <person name="Shi J."/>
            <person name="Meng S."/>
            <person name="Wan L."/>
            <person name="Zhang Z."/>
            <person name="Jiang S."/>
            <person name="Zhu H."/>
            <person name="Dai E."/>
            <person name="Chang L."/>
            <person name="Gao H."/>
            <person name="Wan K."/>
            <person name="Zhang L."/>
            <person name="Zhao X."/>
            <person name="Liu H."/>
            <person name="Lyu Z."/>
            <person name="Zhang Y."/>
            <person name="Xu P."/>
        </authorList>
    </citation>
    <scope>PROTEIN SEQUENCE OF 19-38</scope>
    <scope>SEQUENCE REVISION TO N-TERMINUS</scope>
    <source>
        <strain>H37Rv</strain>
    </source>
</reference>
<reference evidence="6" key="3">
    <citation type="journal article" date="2011" name="Mol. Cell. Proteomics">
        <title>Proteogenomic analysis of Mycobacterium tuberculosis by high resolution mass spectrometry.</title>
        <authorList>
            <person name="Kelkar D.S."/>
            <person name="Kumar D."/>
            <person name="Kumar P."/>
            <person name="Balakrishnan L."/>
            <person name="Muthusamy B."/>
            <person name="Yadav A.K."/>
            <person name="Shrivastava P."/>
            <person name="Marimuthu A."/>
            <person name="Anand S."/>
            <person name="Sundaram H."/>
            <person name="Kingsbury R."/>
            <person name="Harsha H.C."/>
            <person name="Nair B."/>
            <person name="Prasad T.S."/>
            <person name="Chauhan D.S."/>
            <person name="Katoch K."/>
            <person name="Katoch V.M."/>
            <person name="Kumar P."/>
            <person name="Chaerkady R."/>
            <person name="Ramachandran S."/>
            <person name="Dash D."/>
            <person name="Pandey A."/>
        </authorList>
    </citation>
    <scope>IDENTIFICATION BY MASS SPECTROMETRY [LARGE SCALE ANALYSIS]</scope>
</reference>
<evidence type="ECO:0000255" key="1"/>
<evidence type="ECO:0000256" key="2">
    <source>
        <dbReference type="SAM" id="MobiDB-lite"/>
    </source>
</evidence>
<evidence type="ECO:0000269" key="3">
    <source>
    </source>
</evidence>
<evidence type="ECO:0000305" key="4"/>
<evidence type="ECO:0000312" key="5">
    <source>
        <dbReference type="EMBL" id="CCP43194.1"/>
    </source>
</evidence>
<evidence type="ECO:0007744" key="6">
    <source>
    </source>
</evidence>
<proteinExistence type="evidence at protein level"/>
<feature type="chain" id="PRO_0000456389" description="Protein Rv0461">
    <location>
        <begin position="1"/>
        <end position="200"/>
    </location>
</feature>
<feature type="transmembrane region" description="Helical" evidence="1">
    <location>
        <begin position="102"/>
        <end position="122"/>
    </location>
</feature>
<feature type="transmembrane region" description="Helical" evidence="1">
    <location>
        <begin position="134"/>
        <end position="154"/>
    </location>
</feature>
<feature type="transmembrane region" description="Helical" evidence="1">
    <location>
        <begin position="159"/>
        <end position="179"/>
    </location>
</feature>
<feature type="region of interest" description="Disordered" evidence="2">
    <location>
        <begin position="47"/>
        <end position="67"/>
    </location>
</feature>
<comment type="subcellular location">
    <subcellularLocation>
        <location evidence="4">Cell membrane</location>
        <topology evidence="1">Multi-pass membrane protein</topology>
    </subcellularLocation>
</comment>
<comment type="sequence caution" evidence="3">
    <conflict type="erroneous initiation">
        <sequence resource="EMBL-CDS" id="CCP43194"/>
    </conflict>
    <text>Truncated N-terminus.</text>
</comment>